<feature type="chain" id="PRO_1000077719" description="Bis(5'-nucleosyl)-tetraphosphatase, symmetrical">
    <location>
        <begin position="1"/>
        <end position="282"/>
    </location>
</feature>
<protein>
    <recommendedName>
        <fullName evidence="1">Bis(5'-nucleosyl)-tetraphosphatase, symmetrical</fullName>
        <ecNumber evidence="1">3.6.1.41</ecNumber>
    </recommendedName>
    <alternativeName>
        <fullName evidence="1">Ap4A hydrolase</fullName>
    </alternativeName>
    <alternativeName>
        <fullName evidence="1">Diadenosine 5',5'''-P1,P4-tetraphosphate pyrophosphohydrolase</fullName>
    </alternativeName>
    <alternativeName>
        <fullName evidence="1">Diadenosine tetraphosphatase</fullName>
    </alternativeName>
</protein>
<sequence>MATYLIGDVHGCYDELIALLQQVEFTPDTDTLWLTGDLVARGPGSLDVLRYVKSLGNSVRLVLGNHDLHLLAVFAGISRNKPKDRLTPLLEAPDADELLNWLRRQPLLQVDEEKKLVMAHAGITPQWDLQTAKECARDVEAVLSSDSYPFFLDAMYGDMPNNWSPELSGLARLRFITNAFTRMRYCFPNGQLDMYSKASPENAPAPLKPWFAIPGPVSEAYSIAFGHWASLEGKGTPEGIYALDTGCCWGGELTCLRWEDKQYFVQPSNRQMDMGEGEAVNA</sequence>
<proteinExistence type="inferred from homology"/>
<gene>
    <name evidence="1" type="primary">apaH</name>
    <name type="ordered locus">SPAB_00113</name>
</gene>
<keyword id="KW-0378">Hydrolase</keyword>
<organism>
    <name type="scientific">Salmonella paratyphi B (strain ATCC BAA-1250 / SPB7)</name>
    <dbReference type="NCBI Taxonomy" id="1016998"/>
    <lineage>
        <taxon>Bacteria</taxon>
        <taxon>Pseudomonadati</taxon>
        <taxon>Pseudomonadota</taxon>
        <taxon>Gammaproteobacteria</taxon>
        <taxon>Enterobacterales</taxon>
        <taxon>Enterobacteriaceae</taxon>
        <taxon>Salmonella</taxon>
    </lineage>
</organism>
<name>APAH_SALPB</name>
<comment type="function">
    <text evidence="1">Hydrolyzes diadenosine 5',5'''-P1,P4-tetraphosphate to yield ADP.</text>
</comment>
<comment type="catalytic activity">
    <reaction evidence="1">
        <text>P(1),P(4)-bis(5'-adenosyl) tetraphosphate + H2O = 2 ADP + 2 H(+)</text>
        <dbReference type="Rhea" id="RHEA:24252"/>
        <dbReference type="ChEBI" id="CHEBI:15377"/>
        <dbReference type="ChEBI" id="CHEBI:15378"/>
        <dbReference type="ChEBI" id="CHEBI:58141"/>
        <dbReference type="ChEBI" id="CHEBI:456216"/>
        <dbReference type="EC" id="3.6.1.41"/>
    </reaction>
</comment>
<comment type="similarity">
    <text evidence="1">Belongs to the Ap4A hydrolase family.</text>
</comment>
<dbReference type="EC" id="3.6.1.41" evidence="1"/>
<dbReference type="EMBL" id="CP000886">
    <property type="protein sequence ID" value="ABX65556.1"/>
    <property type="molecule type" value="Genomic_DNA"/>
</dbReference>
<dbReference type="RefSeq" id="WP_000257211.1">
    <property type="nucleotide sequence ID" value="NC_010102.1"/>
</dbReference>
<dbReference type="SMR" id="A9MYM2"/>
<dbReference type="KEGG" id="spq:SPAB_00113"/>
<dbReference type="PATRIC" id="fig|1016998.12.peg.107"/>
<dbReference type="HOGENOM" id="CLU_056184_2_0_6"/>
<dbReference type="BioCyc" id="SENT1016998:SPAB_RS00440-MONOMER"/>
<dbReference type="Proteomes" id="UP000008556">
    <property type="component" value="Chromosome"/>
</dbReference>
<dbReference type="GO" id="GO:0008803">
    <property type="term" value="F:bis(5'-nucleosyl)-tetraphosphatase (symmetrical) activity"/>
    <property type="evidence" value="ECO:0007669"/>
    <property type="project" value="UniProtKB-UniRule"/>
</dbReference>
<dbReference type="CDD" id="cd07422">
    <property type="entry name" value="MPP_ApaH"/>
    <property type="match status" value="1"/>
</dbReference>
<dbReference type="FunFam" id="3.60.21.10:FF:000013">
    <property type="entry name" value="Bis(5'-nucleosyl)-tetraphosphatase, symmetrical"/>
    <property type="match status" value="1"/>
</dbReference>
<dbReference type="Gene3D" id="3.60.21.10">
    <property type="match status" value="1"/>
</dbReference>
<dbReference type="HAMAP" id="MF_00199">
    <property type="entry name" value="ApaH"/>
    <property type="match status" value="1"/>
</dbReference>
<dbReference type="InterPro" id="IPR004617">
    <property type="entry name" value="ApaH"/>
</dbReference>
<dbReference type="InterPro" id="IPR004843">
    <property type="entry name" value="Calcineurin-like_PHP_ApaH"/>
</dbReference>
<dbReference type="InterPro" id="IPR029052">
    <property type="entry name" value="Metallo-depent_PP-like"/>
</dbReference>
<dbReference type="NCBIfam" id="TIGR00668">
    <property type="entry name" value="apaH"/>
    <property type="match status" value="1"/>
</dbReference>
<dbReference type="NCBIfam" id="NF001204">
    <property type="entry name" value="PRK00166.1"/>
    <property type="match status" value="1"/>
</dbReference>
<dbReference type="PANTHER" id="PTHR40942">
    <property type="match status" value="1"/>
</dbReference>
<dbReference type="PANTHER" id="PTHR40942:SF4">
    <property type="entry name" value="CYTOCHROME C5"/>
    <property type="match status" value="1"/>
</dbReference>
<dbReference type="Pfam" id="PF00149">
    <property type="entry name" value="Metallophos"/>
    <property type="match status" value="1"/>
</dbReference>
<dbReference type="PIRSF" id="PIRSF000903">
    <property type="entry name" value="B5n-ttraPtase_sm"/>
    <property type="match status" value="1"/>
</dbReference>
<dbReference type="SUPFAM" id="SSF56300">
    <property type="entry name" value="Metallo-dependent phosphatases"/>
    <property type="match status" value="1"/>
</dbReference>
<reference key="1">
    <citation type="submission" date="2007-11" db="EMBL/GenBank/DDBJ databases">
        <authorList>
            <consortium name="The Salmonella enterica serovar Paratyphi B Genome Sequencing Project"/>
            <person name="McClelland M."/>
            <person name="Sanderson E.K."/>
            <person name="Porwollik S."/>
            <person name="Spieth J."/>
            <person name="Clifton W.S."/>
            <person name="Fulton R."/>
            <person name="Cordes M."/>
            <person name="Wollam A."/>
            <person name="Shah N."/>
            <person name="Pepin K."/>
            <person name="Bhonagiri V."/>
            <person name="Nash W."/>
            <person name="Johnson M."/>
            <person name="Thiruvilangam P."/>
            <person name="Wilson R."/>
        </authorList>
    </citation>
    <scope>NUCLEOTIDE SEQUENCE [LARGE SCALE GENOMIC DNA]</scope>
    <source>
        <strain>ATCC BAA-1250 / SPB7</strain>
    </source>
</reference>
<evidence type="ECO:0000255" key="1">
    <source>
        <dbReference type="HAMAP-Rule" id="MF_00199"/>
    </source>
</evidence>
<accession>A9MYM2</accession>